<accession>E7CLN6</accession>
<protein>
    <recommendedName>
        <fullName evidence="3">Putative beta-neurotoxin RjAa12</fullName>
    </recommendedName>
</protein>
<comment type="function">
    <text evidence="1">Beta toxins bind voltage-independently at site-4 of sodium channels (Nav) and shift the voltage of activation toward more negative potentials thereby affecting sodium channel activation and promoting spontaneous and repetitive firing.</text>
</comment>
<comment type="subcellular location">
    <subcellularLocation>
        <location evidence="2">Secreted</location>
    </subcellularLocation>
</comment>
<comment type="tissue specificity">
    <text evidence="7">Expressed by the venom gland.</text>
</comment>
<comment type="domain">
    <text evidence="6">Has the structural arrangement of an alpha-helix connected to antiparallel beta-sheets by disulfide bonds (CS-alpha/beta).</text>
</comment>
<comment type="similarity">
    <text evidence="4">Belongs to the long (4 C-C) scorpion toxin superfamily. Sodium channel inhibitor family. Beta subfamily.</text>
</comment>
<sequence length="65" mass="7327">KEGYPVGRDGCKISCVINNNFCKVECQAKWRQSDGYCYFWGLSCYCTNLPEDAQVWDSSTNKCGG</sequence>
<proteinExistence type="evidence at transcript level"/>
<feature type="chain" id="PRO_0000413447" description="Putative beta-neurotoxin RjAa12">
    <location>
        <begin position="1"/>
        <end position="65"/>
    </location>
</feature>
<feature type="domain" description="LCN-type CS-alpha/beta" evidence="5">
    <location>
        <begin position="1"/>
        <end position="64"/>
    </location>
</feature>
<feature type="disulfide bond" evidence="5">
    <location>
        <begin position="11"/>
        <end position="63"/>
    </location>
</feature>
<feature type="disulfide bond" evidence="5">
    <location>
        <begin position="15"/>
        <end position="37"/>
    </location>
</feature>
<feature type="disulfide bond" evidence="5">
    <location>
        <begin position="22"/>
        <end position="44"/>
    </location>
</feature>
<feature type="disulfide bond" evidence="5">
    <location>
        <begin position="26"/>
        <end position="46"/>
    </location>
</feature>
<feature type="non-terminal residue" evidence="8">
    <location>
        <position position="1"/>
    </location>
</feature>
<keyword id="KW-1015">Disulfide bond</keyword>
<keyword id="KW-0872">Ion channel impairing toxin</keyword>
<keyword id="KW-0528">Neurotoxin</keyword>
<keyword id="KW-0964">Secreted</keyword>
<keyword id="KW-0800">Toxin</keyword>
<keyword id="KW-0738">Voltage-gated sodium channel impairing toxin</keyword>
<name>SCX12_RHOJU</name>
<evidence type="ECO:0000250" key="1"/>
<evidence type="ECO:0000250" key="2">
    <source>
        <dbReference type="UniProtKB" id="P15226"/>
    </source>
</evidence>
<evidence type="ECO:0000250" key="3">
    <source>
        <dbReference type="UniProtKB" id="Q1I176"/>
    </source>
</evidence>
<evidence type="ECO:0000255" key="4"/>
<evidence type="ECO:0000255" key="5">
    <source>
        <dbReference type="PROSITE-ProRule" id="PRU01210"/>
    </source>
</evidence>
<evidence type="ECO:0000305" key="6"/>
<evidence type="ECO:0000305" key="7">
    <source>
    </source>
</evidence>
<evidence type="ECO:0000312" key="8">
    <source>
        <dbReference type="EMBL" id="ADV16823.1"/>
    </source>
</evidence>
<dbReference type="EMBL" id="HM233945">
    <property type="protein sequence ID" value="ADV16823.1"/>
    <property type="molecule type" value="mRNA"/>
</dbReference>
<dbReference type="SMR" id="E7CLN6"/>
<dbReference type="GO" id="GO:0005576">
    <property type="term" value="C:extracellular region"/>
    <property type="evidence" value="ECO:0007669"/>
    <property type="project" value="UniProtKB-SubCell"/>
</dbReference>
<dbReference type="GO" id="GO:0019871">
    <property type="term" value="F:sodium channel inhibitor activity"/>
    <property type="evidence" value="ECO:0007669"/>
    <property type="project" value="InterPro"/>
</dbReference>
<dbReference type="GO" id="GO:0090729">
    <property type="term" value="F:toxin activity"/>
    <property type="evidence" value="ECO:0007669"/>
    <property type="project" value="UniProtKB-KW"/>
</dbReference>
<dbReference type="GO" id="GO:0006952">
    <property type="term" value="P:defense response"/>
    <property type="evidence" value="ECO:0007669"/>
    <property type="project" value="InterPro"/>
</dbReference>
<dbReference type="CDD" id="cd23106">
    <property type="entry name" value="neurotoxins_LC_scorpion"/>
    <property type="match status" value="1"/>
</dbReference>
<dbReference type="FunFam" id="3.30.30.10:FF:000002">
    <property type="entry name" value="Alpha-like toxin BmK-M1"/>
    <property type="match status" value="1"/>
</dbReference>
<dbReference type="Gene3D" id="3.30.30.10">
    <property type="entry name" value="Knottin, scorpion toxin-like"/>
    <property type="match status" value="1"/>
</dbReference>
<dbReference type="InterPro" id="IPR044062">
    <property type="entry name" value="LCN-type_CS_alpha_beta_dom"/>
</dbReference>
<dbReference type="InterPro" id="IPR003614">
    <property type="entry name" value="Scorpion_toxin-like"/>
</dbReference>
<dbReference type="InterPro" id="IPR036574">
    <property type="entry name" value="Scorpion_toxin-like_sf"/>
</dbReference>
<dbReference type="InterPro" id="IPR018218">
    <property type="entry name" value="Scorpion_toxinL"/>
</dbReference>
<dbReference type="InterPro" id="IPR002061">
    <property type="entry name" value="Scorpion_toxinL/defensin"/>
</dbReference>
<dbReference type="Pfam" id="PF00537">
    <property type="entry name" value="Toxin_3"/>
    <property type="match status" value="1"/>
</dbReference>
<dbReference type="PRINTS" id="PR00285">
    <property type="entry name" value="SCORPNTOXIN"/>
</dbReference>
<dbReference type="SMART" id="SM00505">
    <property type="entry name" value="Knot1"/>
    <property type="match status" value="1"/>
</dbReference>
<dbReference type="SUPFAM" id="SSF57095">
    <property type="entry name" value="Scorpion toxin-like"/>
    <property type="match status" value="1"/>
</dbReference>
<dbReference type="PROSITE" id="PS51863">
    <property type="entry name" value="LCN_CSAB"/>
    <property type="match status" value="1"/>
</dbReference>
<reference evidence="8" key="1">
    <citation type="journal article" date="2011" name="Toxicon">
        <title>Biochemical and molecular characterization of the venom from the Cuban scorpion Rhopalurus junceus.</title>
        <authorList>
            <person name="Garcia-Gomez B.I."/>
            <person name="Coronas F.I."/>
            <person name="Restano-Cassulini R."/>
            <person name="Rodriguez R.R."/>
            <person name="Possani L.D."/>
        </authorList>
    </citation>
    <scope>NUCLEOTIDE SEQUENCE [MRNA]</scope>
    <source>
        <tissue evidence="8">Venom gland</tissue>
    </source>
</reference>
<organism>
    <name type="scientific">Rhopalurus junceus</name>
    <name type="common">Caribbean blue scorpion</name>
    <dbReference type="NCBI Taxonomy" id="419285"/>
    <lineage>
        <taxon>Eukaryota</taxon>
        <taxon>Metazoa</taxon>
        <taxon>Ecdysozoa</taxon>
        <taxon>Arthropoda</taxon>
        <taxon>Chelicerata</taxon>
        <taxon>Arachnida</taxon>
        <taxon>Scorpiones</taxon>
        <taxon>Buthida</taxon>
        <taxon>Buthoidea</taxon>
        <taxon>Buthidae</taxon>
        <taxon>Rhopalurus</taxon>
    </lineage>
</organism>